<dbReference type="EC" id="4.2.1.49" evidence="1"/>
<dbReference type="EMBL" id="CP000075">
    <property type="protein sequence ID" value="AAY39855.1"/>
    <property type="molecule type" value="Genomic_DNA"/>
</dbReference>
<dbReference type="RefSeq" id="WP_011269249.1">
    <property type="nucleotide sequence ID" value="NC_007005.1"/>
</dbReference>
<dbReference type="RefSeq" id="YP_237893.1">
    <property type="nucleotide sequence ID" value="NC_007005.1"/>
</dbReference>
<dbReference type="SMR" id="Q4ZLW7"/>
<dbReference type="STRING" id="205918.Psyr_4828"/>
<dbReference type="KEGG" id="psb:Psyr_4828"/>
<dbReference type="PATRIC" id="fig|205918.7.peg.4991"/>
<dbReference type="eggNOG" id="COG2987">
    <property type="taxonomic scope" value="Bacteria"/>
</dbReference>
<dbReference type="HOGENOM" id="CLU_018868_0_1_6"/>
<dbReference type="OrthoDB" id="9764874at2"/>
<dbReference type="UniPathway" id="UPA00379">
    <property type="reaction ID" value="UER00550"/>
</dbReference>
<dbReference type="Proteomes" id="UP000000426">
    <property type="component" value="Chromosome"/>
</dbReference>
<dbReference type="GO" id="GO:0005737">
    <property type="term" value="C:cytoplasm"/>
    <property type="evidence" value="ECO:0007669"/>
    <property type="project" value="UniProtKB-SubCell"/>
</dbReference>
<dbReference type="GO" id="GO:0016153">
    <property type="term" value="F:urocanate hydratase activity"/>
    <property type="evidence" value="ECO:0007669"/>
    <property type="project" value="UniProtKB-UniRule"/>
</dbReference>
<dbReference type="GO" id="GO:0019556">
    <property type="term" value="P:L-histidine catabolic process to glutamate and formamide"/>
    <property type="evidence" value="ECO:0007669"/>
    <property type="project" value="UniProtKB-UniPathway"/>
</dbReference>
<dbReference type="GO" id="GO:0019557">
    <property type="term" value="P:L-histidine catabolic process to glutamate and formate"/>
    <property type="evidence" value="ECO:0007669"/>
    <property type="project" value="UniProtKB-UniPathway"/>
</dbReference>
<dbReference type="FunFam" id="3.40.50.10730:FF:000001">
    <property type="entry name" value="Urocanate hydratase"/>
    <property type="match status" value="1"/>
</dbReference>
<dbReference type="Gene3D" id="3.40.50.10730">
    <property type="entry name" value="Urocanase like domains"/>
    <property type="match status" value="1"/>
</dbReference>
<dbReference type="Gene3D" id="3.40.1770.10">
    <property type="entry name" value="Urocanase superfamily"/>
    <property type="match status" value="1"/>
</dbReference>
<dbReference type="HAMAP" id="MF_00577">
    <property type="entry name" value="HutU"/>
    <property type="match status" value="1"/>
</dbReference>
<dbReference type="InterPro" id="IPR055351">
    <property type="entry name" value="Urocanase"/>
</dbReference>
<dbReference type="InterPro" id="IPR023637">
    <property type="entry name" value="Urocanase-like"/>
</dbReference>
<dbReference type="InterPro" id="IPR035401">
    <property type="entry name" value="Urocanase_C"/>
</dbReference>
<dbReference type="InterPro" id="IPR038364">
    <property type="entry name" value="Urocanase_central_sf"/>
</dbReference>
<dbReference type="InterPro" id="IPR023636">
    <property type="entry name" value="Urocanase_CS"/>
</dbReference>
<dbReference type="InterPro" id="IPR035400">
    <property type="entry name" value="Urocanase_N"/>
</dbReference>
<dbReference type="InterPro" id="IPR035085">
    <property type="entry name" value="Urocanase_Rossmann-like"/>
</dbReference>
<dbReference type="InterPro" id="IPR036190">
    <property type="entry name" value="Urocanase_sf"/>
</dbReference>
<dbReference type="NCBIfam" id="TIGR01228">
    <property type="entry name" value="hutU"/>
    <property type="match status" value="1"/>
</dbReference>
<dbReference type="NCBIfam" id="NF003820">
    <property type="entry name" value="PRK05414.1"/>
    <property type="match status" value="1"/>
</dbReference>
<dbReference type="PANTHER" id="PTHR12216">
    <property type="entry name" value="UROCANATE HYDRATASE"/>
    <property type="match status" value="1"/>
</dbReference>
<dbReference type="PANTHER" id="PTHR12216:SF4">
    <property type="entry name" value="UROCANATE HYDRATASE"/>
    <property type="match status" value="1"/>
</dbReference>
<dbReference type="Pfam" id="PF01175">
    <property type="entry name" value="Urocanase"/>
    <property type="match status" value="1"/>
</dbReference>
<dbReference type="Pfam" id="PF17392">
    <property type="entry name" value="Urocanase_C"/>
    <property type="match status" value="1"/>
</dbReference>
<dbReference type="Pfam" id="PF17391">
    <property type="entry name" value="Urocanase_N"/>
    <property type="match status" value="1"/>
</dbReference>
<dbReference type="PIRSF" id="PIRSF001423">
    <property type="entry name" value="Urocanate_hydrat"/>
    <property type="match status" value="1"/>
</dbReference>
<dbReference type="SUPFAM" id="SSF111326">
    <property type="entry name" value="Urocanase"/>
    <property type="match status" value="1"/>
</dbReference>
<dbReference type="PROSITE" id="PS01233">
    <property type="entry name" value="UROCANASE"/>
    <property type="match status" value="1"/>
</dbReference>
<comment type="function">
    <text evidence="1">Catalyzes the conversion of urocanate to 4-imidazolone-5-propionate.</text>
</comment>
<comment type="catalytic activity">
    <reaction evidence="1">
        <text>4-imidazolone-5-propanoate = trans-urocanate + H2O</text>
        <dbReference type="Rhea" id="RHEA:13101"/>
        <dbReference type="ChEBI" id="CHEBI:15377"/>
        <dbReference type="ChEBI" id="CHEBI:17771"/>
        <dbReference type="ChEBI" id="CHEBI:77893"/>
        <dbReference type="EC" id="4.2.1.49"/>
    </reaction>
</comment>
<comment type="cofactor">
    <cofactor evidence="1">
        <name>NAD(+)</name>
        <dbReference type="ChEBI" id="CHEBI:57540"/>
    </cofactor>
    <text evidence="1">Binds 1 NAD(+) per subunit.</text>
</comment>
<comment type="pathway">
    <text evidence="1">Amino-acid degradation; L-histidine degradation into L-glutamate; N-formimidoyl-L-glutamate from L-histidine: step 2/3.</text>
</comment>
<comment type="subcellular location">
    <subcellularLocation>
        <location evidence="1">Cytoplasm</location>
    </subcellularLocation>
</comment>
<comment type="similarity">
    <text evidence="1">Belongs to the urocanase family.</text>
</comment>
<evidence type="ECO:0000255" key="1">
    <source>
        <dbReference type="HAMAP-Rule" id="MF_00577"/>
    </source>
</evidence>
<evidence type="ECO:0000256" key="2">
    <source>
        <dbReference type="SAM" id="MobiDB-lite"/>
    </source>
</evidence>
<sequence>MTENNQHLKQDWTRHREGVVRAARGTQLTAKSWLTEAPLRMLMNNLDPEVAENPNELVVYGGIGRAARNWECYDKIVESLTQLNDDETLLVQSGKPVGVFKTHSNAPRVLIANSNLVPHWASWEHFNELDAKGLAMYGQMTAGSWIYIGSQGIVQGTYETFVEAGRQHYDGNLKGRWVLTAGLGGMGGAQPLAATLAGACSLNIECQQSRIDFRIKTRYVDEQAADLDDALARIAKYTAEGKAISIALCGNAAEILPEMVRRGVRPDMVTDQTSAHDPLNGYLPKGWTWDEYRARSVSEPASVVKAAKQSMAEHVEAMLAFQQAGIPTFDYGNNIRQMAKEVGVTNAFDFPGFVPAYIRPLFCRGIGPFRWAALSGDPQDIYKTDAKVKELIPDDEHLHNWLDMARERISFQGLPARICWVGLGQRARLGLAFNEMVRSGELSAPVVIGRDHLDSGSVASPNRETESMRDGSDAVSDWPLLNALLNTASGATWVSLHHGGGVGMGFSQHSGMVIVCDGTDEAAERIARVLHNDPATGVMRHADAGYDIAIDCAREQGLNLPMIGR</sequence>
<proteinExistence type="inferred from homology"/>
<feature type="chain" id="PRO_1000025144" description="Urocanate hydratase">
    <location>
        <begin position="1"/>
        <end position="565"/>
    </location>
</feature>
<feature type="region of interest" description="Disordered" evidence="2">
    <location>
        <begin position="453"/>
        <end position="472"/>
    </location>
</feature>
<feature type="compositionally biased region" description="Basic and acidic residues" evidence="2">
    <location>
        <begin position="463"/>
        <end position="472"/>
    </location>
</feature>
<feature type="active site" evidence="1">
    <location>
        <position position="419"/>
    </location>
</feature>
<feature type="binding site" evidence="1">
    <location>
        <begin position="61"/>
        <end position="62"/>
    </location>
    <ligand>
        <name>NAD(+)</name>
        <dbReference type="ChEBI" id="CHEBI:57540"/>
    </ligand>
</feature>
<feature type="binding site" evidence="1">
    <location>
        <position position="139"/>
    </location>
    <ligand>
        <name>NAD(+)</name>
        <dbReference type="ChEBI" id="CHEBI:57540"/>
    </ligand>
</feature>
<feature type="binding site" evidence="1">
    <location>
        <begin position="185"/>
        <end position="187"/>
    </location>
    <ligand>
        <name>NAD(+)</name>
        <dbReference type="ChEBI" id="CHEBI:57540"/>
    </ligand>
</feature>
<feature type="binding site" evidence="1">
    <location>
        <position position="205"/>
    </location>
    <ligand>
        <name>NAD(+)</name>
        <dbReference type="ChEBI" id="CHEBI:57540"/>
    </ligand>
</feature>
<feature type="binding site" evidence="1">
    <location>
        <position position="210"/>
    </location>
    <ligand>
        <name>NAD(+)</name>
        <dbReference type="ChEBI" id="CHEBI:57540"/>
    </ligand>
</feature>
<feature type="binding site" evidence="1">
    <location>
        <begin position="251"/>
        <end position="252"/>
    </location>
    <ligand>
        <name>NAD(+)</name>
        <dbReference type="ChEBI" id="CHEBI:57540"/>
    </ligand>
</feature>
<feature type="binding site" evidence="1">
    <location>
        <begin position="272"/>
        <end position="276"/>
    </location>
    <ligand>
        <name>NAD(+)</name>
        <dbReference type="ChEBI" id="CHEBI:57540"/>
    </ligand>
</feature>
<feature type="binding site" evidence="1">
    <location>
        <begin position="282"/>
        <end position="283"/>
    </location>
    <ligand>
        <name>NAD(+)</name>
        <dbReference type="ChEBI" id="CHEBI:57540"/>
    </ligand>
</feature>
<feature type="binding site" evidence="1">
    <location>
        <position position="331"/>
    </location>
    <ligand>
        <name>NAD(+)</name>
        <dbReference type="ChEBI" id="CHEBI:57540"/>
    </ligand>
</feature>
<feature type="binding site" evidence="1">
    <location>
        <position position="501"/>
    </location>
    <ligand>
        <name>NAD(+)</name>
        <dbReference type="ChEBI" id="CHEBI:57540"/>
    </ligand>
</feature>
<accession>Q4ZLW7</accession>
<gene>
    <name evidence="1" type="primary">hutU</name>
    <name type="ordered locus">Psyr_4828</name>
</gene>
<keyword id="KW-0963">Cytoplasm</keyword>
<keyword id="KW-0369">Histidine metabolism</keyword>
<keyword id="KW-0456">Lyase</keyword>
<keyword id="KW-0520">NAD</keyword>
<reference key="1">
    <citation type="journal article" date="2005" name="Proc. Natl. Acad. Sci. U.S.A.">
        <title>Comparison of the complete genome sequences of Pseudomonas syringae pv. syringae B728a and pv. tomato DC3000.</title>
        <authorList>
            <person name="Feil H."/>
            <person name="Feil W.S."/>
            <person name="Chain P."/>
            <person name="Larimer F."/>
            <person name="Dibartolo G."/>
            <person name="Copeland A."/>
            <person name="Lykidis A."/>
            <person name="Trong S."/>
            <person name="Nolan M."/>
            <person name="Goltsman E."/>
            <person name="Thiel J."/>
            <person name="Malfatti S."/>
            <person name="Loper J.E."/>
            <person name="Lapidus A."/>
            <person name="Detter J.C."/>
            <person name="Land M."/>
            <person name="Richardson P.M."/>
            <person name="Kyrpides N.C."/>
            <person name="Ivanova N."/>
            <person name="Lindow S.E."/>
        </authorList>
    </citation>
    <scope>NUCLEOTIDE SEQUENCE [LARGE SCALE GENOMIC DNA]</scope>
    <source>
        <strain>B728a</strain>
    </source>
</reference>
<organism>
    <name type="scientific">Pseudomonas syringae pv. syringae (strain B728a)</name>
    <dbReference type="NCBI Taxonomy" id="205918"/>
    <lineage>
        <taxon>Bacteria</taxon>
        <taxon>Pseudomonadati</taxon>
        <taxon>Pseudomonadota</taxon>
        <taxon>Gammaproteobacteria</taxon>
        <taxon>Pseudomonadales</taxon>
        <taxon>Pseudomonadaceae</taxon>
        <taxon>Pseudomonas</taxon>
        <taxon>Pseudomonas syringae</taxon>
    </lineage>
</organism>
<name>HUTU_PSEU2</name>
<protein>
    <recommendedName>
        <fullName evidence="1">Urocanate hydratase</fullName>
        <shortName evidence="1">Urocanase</shortName>
        <ecNumber evidence="1">4.2.1.49</ecNumber>
    </recommendedName>
    <alternativeName>
        <fullName evidence="1">Imidazolonepropionate hydrolase</fullName>
    </alternativeName>
</protein>